<name>STHA_SHIFL</name>
<feature type="chain" id="PRO_0000068074" description="Soluble pyridine nucleotide transhydrogenase">
    <location>
        <begin position="1"/>
        <end position="466"/>
    </location>
</feature>
<feature type="binding site" evidence="2">
    <location>
        <begin position="36"/>
        <end position="45"/>
    </location>
    <ligand>
        <name>FAD</name>
        <dbReference type="ChEBI" id="CHEBI:57692"/>
    </ligand>
</feature>
<keyword id="KW-0963">Cytoplasm</keyword>
<keyword id="KW-0274">FAD</keyword>
<keyword id="KW-0285">Flavoprotein</keyword>
<keyword id="KW-0520">NAD</keyword>
<keyword id="KW-0521">NADP</keyword>
<keyword id="KW-0560">Oxidoreductase</keyword>
<keyword id="KW-1185">Reference proteome</keyword>
<reference key="1">
    <citation type="journal article" date="2002" name="Nucleic Acids Res.">
        <title>Genome sequence of Shigella flexneri 2a: insights into pathogenicity through comparison with genomes of Escherichia coli K12 and O157.</title>
        <authorList>
            <person name="Jin Q."/>
            <person name="Yuan Z."/>
            <person name="Xu J."/>
            <person name="Wang Y."/>
            <person name="Shen Y."/>
            <person name="Lu W."/>
            <person name="Wang J."/>
            <person name="Liu H."/>
            <person name="Yang J."/>
            <person name="Yang F."/>
            <person name="Zhang X."/>
            <person name="Zhang J."/>
            <person name="Yang G."/>
            <person name="Wu H."/>
            <person name="Qu D."/>
            <person name="Dong J."/>
            <person name="Sun L."/>
            <person name="Xue Y."/>
            <person name="Zhao A."/>
            <person name="Gao Y."/>
            <person name="Zhu J."/>
            <person name="Kan B."/>
            <person name="Ding K."/>
            <person name="Chen S."/>
            <person name="Cheng H."/>
            <person name="Yao Z."/>
            <person name="He B."/>
            <person name="Chen R."/>
            <person name="Ma D."/>
            <person name="Qiang B."/>
            <person name="Wen Y."/>
            <person name="Hou Y."/>
            <person name="Yu J."/>
        </authorList>
    </citation>
    <scope>NUCLEOTIDE SEQUENCE [LARGE SCALE GENOMIC DNA]</scope>
    <source>
        <strain>301 / Serotype 2a</strain>
    </source>
</reference>
<reference key="2">
    <citation type="journal article" date="2003" name="Infect. Immun.">
        <title>Complete genome sequence and comparative genomics of Shigella flexneri serotype 2a strain 2457T.</title>
        <authorList>
            <person name="Wei J."/>
            <person name="Goldberg M.B."/>
            <person name="Burland V."/>
            <person name="Venkatesan M.M."/>
            <person name="Deng W."/>
            <person name="Fournier G."/>
            <person name="Mayhew G.F."/>
            <person name="Plunkett G. III"/>
            <person name="Rose D.J."/>
            <person name="Darling A."/>
            <person name="Mau B."/>
            <person name="Perna N.T."/>
            <person name="Payne S.M."/>
            <person name="Runyen-Janecky L.J."/>
            <person name="Zhou S."/>
            <person name="Schwartz D.C."/>
            <person name="Blattner F.R."/>
        </authorList>
    </citation>
    <scope>NUCLEOTIDE SEQUENCE [LARGE SCALE GENOMIC DNA]</scope>
    <source>
        <strain>ATCC 700930 / 2457T / Serotype 2a</strain>
    </source>
</reference>
<evidence type="ECO:0000250" key="1"/>
<evidence type="ECO:0000255" key="2">
    <source>
        <dbReference type="HAMAP-Rule" id="MF_00247"/>
    </source>
</evidence>
<evidence type="ECO:0000305" key="3"/>
<gene>
    <name evidence="2" type="primary">sthA</name>
    <name evidence="2" type="synonym">udhA</name>
    <name type="ordered locus">SF4044</name>
    <name type="ordered locus">S3700</name>
</gene>
<dbReference type="EC" id="1.6.1.1" evidence="2"/>
<dbReference type="EMBL" id="AE005674">
    <property type="protein sequence ID" value="AAN45473.2"/>
    <property type="status" value="ALT_INIT"/>
    <property type="molecule type" value="Genomic_DNA"/>
</dbReference>
<dbReference type="EMBL" id="AE014073">
    <property type="protein sequence ID" value="AAP18729.1"/>
    <property type="status" value="ALT_INIT"/>
    <property type="molecule type" value="Genomic_DNA"/>
</dbReference>
<dbReference type="RefSeq" id="NP_709766.4">
    <property type="nucleotide sequence ID" value="NC_004337.2"/>
</dbReference>
<dbReference type="RefSeq" id="WP_001120816.1">
    <property type="nucleotide sequence ID" value="NZ_WPGW01000135.1"/>
</dbReference>
<dbReference type="SMR" id="Q83MI1"/>
<dbReference type="STRING" id="198214.SF4044"/>
<dbReference type="PaxDb" id="198214-SF4044"/>
<dbReference type="GeneID" id="1026046"/>
<dbReference type="KEGG" id="sfl:SF4044"/>
<dbReference type="KEGG" id="sfx:S3700"/>
<dbReference type="PATRIC" id="fig|198214.7.peg.4767"/>
<dbReference type="HOGENOM" id="CLU_016755_0_0_6"/>
<dbReference type="Proteomes" id="UP000001006">
    <property type="component" value="Chromosome"/>
</dbReference>
<dbReference type="Proteomes" id="UP000002673">
    <property type="component" value="Chromosome"/>
</dbReference>
<dbReference type="GO" id="GO:0005829">
    <property type="term" value="C:cytosol"/>
    <property type="evidence" value="ECO:0007669"/>
    <property type="project" value="TreeGrafter"/>
</dbReference>
<dbReference type="GO" id="GO:0004148">
    <property type="term" value="F:dihydrolipoyl dehydrogenase (NADH) activity"/>
    <property type="evidence" value="ECO:0007669"/>
    <property type="project" value="TreeGrafter"/>
</dbReference>
<dbReference type="GO" id="GO:0050660">
    <property type="term" value="F:flavin adenine dinucleotide binding"/>
    <property type="evidence" value="ECO:0007669"/>
    <property type="project" value="TreeGrafter"/>
</dbReference>
<dbReference type="GO" id="GO:0003957">
    <property type="term" value="F:NAD(P)+ transhydrogenase (Si-specific) activity"/>
    <property type="evidence" value="ECO:0007669"/>
    <property type="project" value="UniProtKB-UniRule"/>
</dbReference>
<dbReference type="GO" id="GO:0006103">
    <property type="term" value="P:2-oxoglutarate metabolic process"/>
    <property type="evidence" value="ECO:0007669"/>
    <property type="project" value="TreeGrafter"/>
</dbReference>
<dbReference type="GO" id="GO:0006739">
    <property type="term" value="P:NADP metabolic process"/>
    <property type="evidence" value="ECO:0007669"/>
    <property type="project" value="UniProtKB-UniRule"/>
</dbReference>
<dbReference type="FunFam" id="3.30.390.30:FF:000002">
    <property type="entry name" value="Soluble pyridine nucleotide transhydrogenase"/>
    <property type="match status" value="1"/>
</dbReference>
<dbReference type="FunFam" id="3.50.50.60:FF:000008">
    <property type="entry name" value="Soluble pyridine nucleotide transhydrogenase"/>
    <property type="match status" value="1"/>
</dbReference>
<dbReference type="Gene3D" id="3.30.390.30">
    <property type="match status" value="1"/>
</dbReference>
<dbReference type="Gene3D" id="3.50.50.60">
    <property type="entry name" value="FAD/NAD(P)-binding domain"/>
    <property type="match status" value="2"/>
</dbReference>
<dbReference type="HAMAP" id="MF_00247">
    <property type="entry name" value="SthA"/>
    <property type="match status" value="1"/>
</dbReference>
<dbReference type="InterPro" id="IPR050151">
    <property type="entry name" value="Class-I_Pyr_Nuc-Dis_Oxidored"/>
</dbReference>
<dbReference type="InterPro" id="IPR036188">
    <property type="entry name" value="FAD/NAD-bd_sf"/>
</dbReference>
<dbReference type="InterPro" id="IPR023753">
    <property type="entry name" value="FAD/NAD-binding_dom"/>
</dbReference>
<dbReference type="InterPro" id="IPR016156">
    <property type="entry name" value="FAD/NAD-linked_Rdtase_dimer_sf"/>
</dbReference>
<dbReference type="InterPro" id="IPR001100">
    <property type="entry name" value="Pyr_nuc-diS_OxRdtase"/>
</dbReference>
<dbReference type="InterPro" id="IPR004099">
    <property type="entry name" value="Pyr_nucl-diS_OxRdtase_dimer"/>
</dbReference>
<dbReference type="InterPro" id="IPR022962">
    <property type="entry name" value="STH_gammaproteobact"/>
</dbReference>
<dbReference type="NCBIfam" id="NF003585">
    <property type="entry name" value="PRK05249.1"/>
    <property type="match status" value="1"/>
</dbReference>
<dbReference type="PANTHER" id="PTHR22912">
    <property type="entry name" value="DISULFIDE OXIDOREDUCTASE"/>
    <property type="match status" value="1"/>
</dbReference>
<dbReference type="PANTHER" id="PTHR22912:SF93">
    <property type="entry name" value="SOLUBLE PYRIDINE NUCLEOTIDE TRANSHYDROGENASE"/>
    <property type="match status" value="1"/>
</dbReference>
<dbReference type="Pfam" id="PF07992">
    <property type="entry name" value="Pyr_redox_2"/>
    <property type="match status" value="1"/>
</dbReference>
<dbReference type="Pfam" id="PF02852">
    <property type="entry name" value="Pyr_redox_dim"/>
    <property type="match status" value="1"/>
</dbReference>
<dbReference type="PIRSF" id="PIRSF000350">
    <property type="entry name" value="Mercury_reductase_MerA"/>
    <property type="match status" value="1"/>
</dbReference>
<dbReference type="PRINTS" id="PR00368">
    <property type="entry name" value="FADPNR"/>
</dbReference>
<dbReference type="PRINTS" id="PR00411">
    <property type="entry name" value="PNDRDTASEI"/>
</dbReference>
<dbReference type="SUPFAM" id="SSF51905">
    <property type="entry name" value="FAD/NAD(P)-binding domain"/>
    <property type="match status" value="1"/>
</dbReference>
<dbReference type="SUPFAM" id="SSF55424">
    <property type="entry name" value="FAD/NAD-linked reductases, dimerisation (C-terminal) domain"/>
    <property type="match status" value="1"/>
</dbReference>
<accession>Q83MI1</accession>
<accession>Q7UB94</accession>
<proteinExistence type="inferred from homology"/>
<organism>
    <name type="scientific">Shigella flexneri</name>
    <dbReference type="NCBI Taxonomy" id="623"/>
    <lineage>
        <taxon>Bacteria</taxon>
        <taxon>Pseudomonadati</taxon>
        <taxon>Pseudomonadota</taxon>
        <taxon>Gammaproteobacteria</taxon>
        <taxon>Enterobacterales</taxon>
        <taxon>Enterobacteriaceae</taxon>
        <taxon>Shigella</taxon>
    </lineage>
</organism>
<sequence>MPHSYDYDAIVIGSGPGGEGAAMGLVKQGARVAVIERYQNVGGGCTHWGTIPSKALRHAVSRIIEFNQNPLYSDHSRLLRSSFADILNHADNVINQQTRMRQGFYERNHCEILQGNARFVDEHTLALDCPDGSVETLTAEKFVIACGSRPYHPTDVDFTHPRIYDSDSILSMHHEPRHVLIYGAGVIGCEYASIFRGMDVKVDLINTRDRLLAFLDQEMSDSLSYHFWNSGVVIRHNEEYEKIESCDDGVIMHLKSGKKLKADCLLYANGRTGNTDSLALQNIGLETDSRGQLKVNSMYQTAQPHVYAVGDVIGYPSLASAAYDQGRIAAQALVKGEATAHLIEDIPTGIYTIPEISSVGKTEQQLTAMKVPYEVGRAQFKHLARAQIVGMNVGTLKILFHRETKEILGIHCFGERAAEIIHIGQAIMEQKGGGNTIEYFVNTTFNYPTMAEAYRVAALNGLNRLF</sequence>
<protein>
    <recommendedName>
        <fullName evidence="2">Soluble pyridine nucleotide transhydrogenase</fullName>
        <shortName evidence="2">STH</shortName>
        <ecNumber evidence="2">1.6.1.1</ecNumber>
    </recommendedName>
    <alternativeName>
        <fullName evidence="2">NAD(P)(+) transhydrogenase [B-specific]</fullName>
    </alternativeName>
</protein>
<comment type="function">
    <text evidence="2">Conversion of NADPH, generated by peripheral catabolic pathways, to NADH, which can enter the respiratory chain for energy generation.</text>
</comment>
<comment type="catalytic activity">
    <reaction evidence="2">
        <text>NAD(+) + NADPH = NADH + NADP(+)</text>
        <dbReference type="Rhea" id="RHEA:11692"/>
        <dbReference type="ChEBI" id="CHEBI:57540"/>
        <dbReference type="ChEBI" id="CHEBI:57783"/>
        <dbReference type="ChEBI" id="CHEBI:57945"/>
        <dbReference type="ChEBI" id="CHEBI:58349"/>
        <dbReference type="EC" id="1.6.1.1"/>
    </reaction>
</comment>
<comment type="cofactor">
    <cofactor evidence="2">
        <name>FAD</name>
        <dbReference type="ChEBI" id="CHEBI:57692"/>
    </cofactor>
    <text evidence="2">Binds 1 FAD per subunit.</text>
</comment>
<comment type="subunit">
    <text evidence="1">Homooligomer; probable homooctamer.</text>
</comment>
<comment type="subcellular location">
    <subcellularLocation>
        <location evidence="2">Cytoplasm</location>
    </subcellularLocation>
</comment>
<comment type="similarity">
    <text evidence="2">Belongs to the class-I pyridine nucleotide-disulfide oxidoreductase family.</text>
</comment>
<comment type="sequence caution" evidence="3">
    <conflict type="erroneous initiation">
        <sequence resource="EMBL-CDS" id="AAN45473"/>
    </conflict>
    <text>Truncated N-terminus.</text>
</comment>
<comment type="sequence caution" evidence="3">
    <conflict type="erroneous initiation">
        <sequence resource="EMBL-CDS" id="AAP18729"/>
    </conflict>
    <text>Truncated N-terminus.</text>
</comment>